<accession>Q8XGA4</accession>
<accession>Q7AMB5</accession>
<proteinExistence type="inferred from homology"/>
<reference key="1">
    <citation type="journal article" date="2001" name="Nature">
        <title>Complete genome sequence of a multiple drug resistant Salmonella enterica serovar Typhi CT18.</title>
        <authorList>
            <person name="Parkhill J."/>
            <person name="Dougan G."/>
            <person name="James K.D."/>
            <person name="Thomson N.R."/>
            <person name="Pickard D."/>
            <person name="Wain J."/>
            <person name="Churcher C.M."/>
            <person name="Mungall K.L."/>
            <person name="Bentley S.D."/>
            <person name="Holden M.T.G."/>
            <person name="Sebaihia M."/>
            <person name="Baker S."/>
            <person name="Basham D."/>
            <person name="Brooks K."/>
            <person name="Chillingworth T."/>
            <person name="Connerton P."/>
            <person name="Cronin A."/>
            <person name="Davis P."/>
            <person name="Davies R.M."/>
            <person name="Dowd L."/>
            <person name="White N."/>
            <person name="Farrar J."/>
            <person name="Feltwell T."/>
            <person name="Hamlin N."/>
            <person name="Haque A."/>
            <person name="Hien T.T."/>
            <person name="Holroyd S."/>
            <person name="Jagels K."/>
            <person name="Krogh A."/>
            <person name="Larsen T.S."/>
            <person name="Leather S."/>
            <person name="Moule S."/>
            <person name="O'Gaora P."/>
            <person name="Parry C."/>
            <person name="Quail M.A."/>
            <person name="Rutherford K.M."/>
            <person name="Simmonds M."/>
            <person name="Skelton J."/>
            <person name="Stevens K."/>
            <person name="Whitehead S."/>
            <person name="Barrell B.G."/>
        </authorList>
    </citation>
    <scope>NUCLEOTIDE SEQUENCE [LARGE SCALE GENOMIC DNA]</scope>
    <source>
        <strain>CT18</strain>
    </source>
</reference>
<reference key="2">
    <citation type="journal article" date="2003" name="J. Bacteriol.">
        <title>Comparative genomics of Salmonella enterica serovar Typhi strains Ty2 and CT18.</title>
        <authorList>
            <person name="Deng W."/>
            <person name="Liou S.-R."/>
            <person name="Plunkett G. III"/>
            <person name="Mayhew G.F."/>
            <person name="Rose D.J."/>
            <person name="Burland V."/>
            <person name="Kodoyianni V."/>
            <person name="Schwartz D.C."/>
            <person name="Blattner F.R."/>
        </authorList>
    </citation>
    <scope>NUCLEOTIDE SEQUENCE [LARGE SCALE GENOMIC DNA]</scope>
    <source>
        <strain>ATCC 700931 / Ty2</strain>
    </source>
</reference>
<dbReference type="EC" id="1.2.1.72" evidence="1"/>
<dbReference type="EMBL" id="AL513382">
    <property type="protein sequence ID" value="CAD02901.1"/>
    <property type="molecule type" value="Genomic_DNA"/>
</dbReference>
<dbReference type="EMBL" id="AE014613">
    <property type="protein sequence ID" value="AAO70541.1"/>
    <property type="molecule type" value="Genomic_DNA"/>
</dbReference>
<dbReference type="RefSeq" id="NP_457469.1">
    <property type="nucleotide sequence ID" value="NC_003198.1"/>
</dbReference>
<dbReference type="RefSeq" id="WP_000218338.1">
    <property type="nucleotide sequence ID" value="NZ_WSUR01000063.1"/>
</dbReference>
<dbReference type="SMR" id="Q8XGA4"/>
<dbReference type="STRING" id="220341.gene:17587103"/>
<dbReference type="KEGG" id="stt:t2989"/>
<dbReference type="KEGG" id="sty:STY3228"/>
<dbReference type="PATRIC" id="fig|220341.7.peg.3291"/>
<dbReference type="eggNOG" id="COG0057">
    <property type="taxonomic scope" value="Bacteria"/>
</dbReference>
<dbReference type="HOGENOM" id="CLU_030140_0_0_6"/>
<dbReference type="OMA" id="ENMVKIM"/>
<dbReference type="UniPathway" id="UPA00244">
    <property type="reaction ID" value="UER00309"/>
</dbReference>
<dbReference type="Proteomes" id="UP000000541">
    <property type="component" value="Chromosome"/>
</dbReference>
<dbReference type="Proteomes" id="UP000002670">
    <property type="component" value="Chromosome"/>
</dbReference>
<dbReference type="GO" id="GO:0005737">
    <property type="term" value="C:cytoplasm"/>
    <property type="evidence" value="ECO:0007669"/>
    <property type="project" value="UniProtKB-SubCell"/>
</dbReference>
<dbReference type="GO" id="GO:0048001">
    <property type="term" value="F:erythrose-4-phosphate dehydrogenase activity"/>
    <property type="evidence" value="ECO:0007669"/>
    <property type="project" value="UniProtKB-UniRule"/>
</dbReference>
<dbReference type="GO" id="GO:0051287">
    <property type="term" value="F:NAD binding"/>
    <property type="evidence" value="ECO:0007669"/>
    <property type="project" value="InterPro"/>
</dbReference>
<dbReference type="GO" id="GO:0050661">
    <property type="term" value="F:NADP binding"/>
    <property type="evidence" value="ECO:0007669"/>
    <property type="project" value="InterPro"/>
</dbReference>
<dbReference type="GO" id="GO:0006006">
    <property type="term" value="P:glucose metabolic process"/>
    <property type="evidence" value="ECO:0007669"/>
    <property type="project" value="InterPro"/>
</dbReference>
<dbReference type="GO" id="GO:0042823">
    <property type="term" value="P:pyridoxal phosphate biosynthetic process"/>
    <property type="evidence" value="ECO:0007669"/>
    <property type="project" value="UniProtKB-UniRule"/>
</dbReference>
<dbReference type="GO" id="GO:0008615">
    <property type="term" value="P:pyridoxine biosynthetic process"/>
    <property type="evidence" value="ECO:0007669"/>
    <property type="project" value="UniProtKB-UniRule"/>
</dbReference>
<dbReference type="CDD" id="cd23937">
    <property type="entry name" value="GAPDH_C_E4PDH"/>
    <property type="match status" value="1"/>
</dbReference>
<dbReference type="CDD" id="cd17892">
    <property type="entry name" value="GAPDH_N_E4PDH"/>
    <property type="match status" value="1"/>
</dbReference>
<dbReference type="FunFam" id="3.30.360.10:FF:000007">
    <property type="entry name" value="D-erythrose-4-phosphate dehydrogenase"/>
    <property type="match status" value="1"/>
</dbReference>
<dbReference type="FunFam" id="3.40.50.720:FF:000001">
    <property type="entry name" value="Glyceraldehyde-3-phosphate dehydrogenase"/>
    <property type="match status" value="1"/>
</dbReference>
<dbReference type="Gene3D" id="3.30.360.10">
    <property type="entry name" value="Dihydrodipicolinate Reductase, domain 2"/>
    <property type="match status" value="1"/>
</dbReference>
<dbReference type="Gene3D" id="3.40.50.720">
    <property type="entry name" value="NAD(P)-binding Rossmann-like Domain"/>
    <property type="match status" value="1"/>
</dbReference>
<dbReference type="HAMAP" id="MF_01640">
    <property type="entry name" value="E4P_dehydrog"/>
    <property type="match status" value="1"/>
</dbReference>
<dbReference type="InterPro" id="IPR006422">
    <property type="entry name" value="E4P_DH_bac"/>
</dbReference>
<dbReference type="InterPro" id="IPR020831">
    <property type="entry name" value="GlycerAld/Erythrose_P_DH"/>
</dbReference>
<dbReference type="InterPro" id="IPR020830">
    <property type="entry name" value="GlycerAld_3-P_DH_AS"/>
</dbReference>
<dbReference type="InterPro" id="IPR020829">
    <property type="entry name" value="GlycerAld_3-P_DH_cat"/>
</dbReference>
<dbReference type="InterPro" id="IPR020828">
    <property type="entry name" value="GlycerAld_3-P_DH_NAD(P)-bd"/>
</dbReference>
<dbReference type="InterPro" id="IPR006424">
    <property type="entry name" value="Glyceraldehyde-3-P_DH_1"/>
</dbReference>
<dbReference type="InterPro" id="IPR036291">
    <property type="entry name" value="NAD(P)-bd_dom_sf"/>
</dbReference>
<dbReference type="NCBIfam" id="TIGR01532">
    <property type="entry name" value="E4PD_g-proteo"/>
    <property type="match status" value="1"/>
</dbReference>
<dbReference type="NCBIfam" id="TIGR01534">
    <property type="entry name" value="GAPDH-I"/>
    <property type="match status" value="1"/>
</dbReference>
<dbReference type="NCBIfam" id="NF010058">
    <property type="entry name" value="PRK13535.1"/>
    <property type="match status" value="1"/>
</dbReference>
<dbReference type="PANTHER" id="PTHR43148">
    <property type="entry name" value="GLYCERALDEHYDE-3-PHOSPHATE DEHYDROGENASE 2"/>
    <property type="match status" value="1"/>
</dbReference>
<dbReference type="Pfam" id="PF02800">
    <property type="entry name" value="Gp_dh_C"/>
    <property type="match status" value="1"/>
</dbReference>
<dbReference type="Pfam" id="PF00044">
    <property type="entry name" value="Gp_dh_N"/>
    <property type="match status" value="1"/>
</dbReference>
<dbReference type="PIRSF" id="PIRSF000149">
    <property type="entry name" value="GAP_DH"/>
    <property type="match status" value="1"/>
</dbReference>
<dbReference type="PRINTS" id="PR00078">
    <property type="entry name" value="G3PDHDRGNASE"/>
</dbReference>
<dbReference type="SMART" id="SM00846">
    <property type="entry name" value="Gp_dh_N"/>
    <property type="match status" value="1"/>
</dbReference>
<dbReference type="SUPFAM" id="SSF55347">
    <property type="entry name" value="Glyceraldehyde-3-phosphate dehydrogenase-like, C-terminal domain"/>
    <property type="match status" value="1"/>
</dbReference>
<dbReference type="SUPFAM" id="SSF51735">
    <property type="entry name" value="NAD(P)-binding Rossmann-fold domains"/>
    <property type="match status" value="1"/>
</dbReference>
<dbReference type="PROSITE" id="PS00071">
    <property type="entry name" value="GAPDH"/>
    <property type="match status" value="1"/>
</dbReference>
<keyword id="KW-0963">Cytoplasm</keyword>
<keyword id="KW-0520">NAD</keyword>
<keyword id="KW-0560">Oxidoreductase</keyword>
<keyword id="KW-0664">Pyridoxine biosynthesis</keyword>
<evidence type="ECO:0000255" key="1">
    <source>
        <dbReference type="HAMAP-Rule" id="MF_01640"/>
    </source>
</evidence>
<name>E4PD_SALTI</name>
<feature type="chain" id="PRO_0000293158" description="D-erythrose-4-phosphate dehydrogenase">
    <location>
        <begin position="1"/>
        <end position="348"/>
    </location>
</feature>
<feature type="active site" description="Nucleophile" evidence="1">
    <location>
        <position position="155"/>
    </location>
</feature>
<feature type="binding site" evidence="1">
    <location>
        <begin position="12"/>
        <end position="13"/>
    </location>
    <ligand>
        <name>NAD(+)</name>
        <dbReference type="ChEBI" id="CHEBI:57540"/>
    </ligand>
</feature>
<feature type="binding site" evidence="1">
    <location>
        <position position="81"/>
    </location>
    <ligand>
        <name>NAD(+)</name>
        <dbReference type="ChEBI" id="CHEBI:57540"/>
    </ligand>
</feature>
<feature type="binding site" evidence="1">
    <location>
        <begin position="154"/>
        <end position="156"/>
    </location>
    <ligand>
        <name>substrate</name>
    </ligand>
</feature>
<feature type="binding site" evidence="1">
    <location>
        <position position="200"/>
    </location>
    <ligand>
        <name>substrate</name>
    </ligand>
</feature>
<feature type="binding site" evidence="1">
    <location>
        <begin position="213"/>
        <end position="214"/>
    </location>
    <ligand>
        <name>substrate</name>
    </ligand>
</feature>
<feature type="binding site" evidence="1">
    <location>
        <position position="236"/>
    </location>
    <ligand>
        <name>substrate</name>
    </ligand>
</feature>
<feature type="binding site" evidence="1">
    <location>
        <position position="318"/>
    </location>
    <ligand>
        <name>NAD(+)</name>
        <dbReference type="ChEBI" id="CHEBI:57540"/>
    </ligand>
</feature>
<feature type="site" description="Activates thiol group during catalysis" evidence="1">
    <location>
        <position position="182"/>
    </location>
</feature>
<comment type="function">
    <text evidence="1">Catalyzes the NAD-dependent conversion of D-erythrose 4-phosphate to 4-phosphoerythronate.</text>
</comment>
<comment type="catalytic activity">
    <reaction evidence="1">
        <text>D-erythrose 4-phosphate + NAD(+) + H2O = 4-phospho-D-erythronate + NADH + 2 H(+)</text>
        <dbReference type="Rhea" id="RHEA:12056"/>
        <dbReference type="ChEBI" id="CHEBI:15377"/>
        <dbReference type="ChEBI" id="CHEBI:15378"/>
        <dbReference type="ChEBI" id="CHEBI:16897"/>
        <dbReference type="ChEBI" id="CHEBI:57540"/>
        <dbReference type="ChEBI" id="CHEBI:57945"/>
        <dbReference type="ChEBI" id="CHEBI:58766"/>
        <dbReference type="EC" id="1.2.1.72"/>
    </reaction>
</comment>
<comment type="pathway">
    <text evidence="1">Cofactor biosynthesis; pyridoxine 5'-phosphate biosynthesis; pyridoxine 5'-phosphate from D-erythrose 4-phosphate: step 1/5.</text>
</comment>
<comment type="subunit">
    <text evidence="1">Homotetramer.</text>
</comment>
<comment type="subcellular location">
    <subcellularLocation>
        <location evidence="1">Cytoplasm</location>
    </subcellularLocation>
</comment>
<comment type="similarity">
    <text evidence="1">Belongs to the glyceraldehyde-3-phosphate dehydrogenase family. Epd subfamily.</text>
</comment>
<protein>
    <recommendedName>
        <fullName evidence="1">D-erythrose-4-phosphate dehydrogenase</fullName>
        <shortName evidence="1">E4PDH</shortName>
        <ecNumber evidence="1">1.2.1.72</ecNumber>
    </recommendedName>
</protein>
<organism>
    <name type="scientific">Salmonella typhi</name>
    <dbReference type="NCBI Taxonomy" id="90370"/>
    <lineage>
        <taxon>Bacteria</taxon>
        <taxon>Pseudomonadati</taxon>
        <taxon>Pseudomonadota</taxon>
        <taxon>Gammaproteobacteria</taxon>
        <taxon>Enterobacterales</taxon>
        <taxon>Enterobacteriaceae</taxon>
        <taxon>Salmonella</taxon>
    </lineage>
</organism>
<gene>
    <name evidence="1" type="primary">epd</name>
    <name type="ordered locus">STY3228</name>
    <name type="ordered locus">t2989</name>
</gene>
<sequence>MTVRIAINGFGRIGRNVVRALYESGRRAEITVVAINELADAAGMAHLLKYDTSHGRFAWEVRHEREQLFVGDDVIRILHERTLADLPWRELGVDVVLDCTGVYGNREHGEAHIAAGAKKVLFSHPGSNDLDATVVFGVNQNQLRAEHRIVSNASCTTNCIIPVIKLLDDAYGIESGTVTTIHSAMNDQQVIDAYHSDLRRTRAASQSIIPVDTKLAAGITRIFPQFNDRFEAIAVRVPTINVTAIDLSVTVKKPVKASEVNQLLQKAAQGAFHGIVDYTESPLVSIDFNHDPHSAIVDGTQTRVSGAHLIKTLVWCDNEWGFANRMLDTTLAMAAVGFRLDASASTKL</sequence>